<proteinExistence type="inferred from homology"/>
<protein>
    <recommendedName>
        <fullName evidence="1">Probable D-serine dehydratase</fullName>
        <ecNumber evidence="1">4.3.1.18</ecNumber>
    </recommendedName>
    <alternativeName>
        <fullName evidence="1">D-serine deaminase</fullName>
        <shortName evidence="1">DSD</shortName>
    </alternativeName>
</protein>
<accession>A6UB95</accession>
<keyword id="KW-0456">Lyase</keyword>
<keyword id="KW-0663">Pyridoxal phosphate</keyword>
<sequence>MTLQLPNDPARSDVLSARPTLWINSLYRDDAIGDTCLPLVPDQVDVAQSDWERLAPLLETCFPELKKTAGAIRSDLTELHALREALGYGGGEFGRVFAKADSALPVAGSIKARGGVYEVFVFAEELARREGLIGDREDIRHLASAEARAFFSSYSIAVGSTGNLGLSVGVAARALGFEATVHMSSDAKPWKVERLRKLGVKVVQHEADYTTAVENARSAAEDDPAVYFVDDEQSRRLFLGYSVAASELVDQLQTFGVAVDADRPLFLYLPCGIGGAPGGVTYGAKKVFGDNAHCFFVEPVQSPCALVHMMSGSEELVSVYDVGLTNSTEADGMAVARMSAFVATVMRNMLAGVFTVDDASLFRWLLLAHEVQGLRLEPSAAAGFAGPGFIVKHPQGRAFCERLKLSDRLRQATHVVWTTGGSFVPQEQFDQFLEIAQASRSR</sequence>
<gene>
    <name evidence="1" type="primary">dsdA</name>
    <name type="ordered locus">Smed_2092</name>
</gene>
<feature type="chain" id="PRO_1000149392" description="Probable D-serine dehydratase">
    <location>
        <begin position="1"/>
        <end position="442"/>
    </location>
</feature>
<feature type="modified residue" description="N6-(pyridoxal phosphate)lysine" evidence="1">
    <location>
        <position position="111"/>
    </location>
</feature>
<dbReference type="EC" id="4.3.1.18" evidence="1"/>
<dbReference type="EMBL" id="CP000738">
    <property type="protein sequence ID" value="ABR60925.1"/>
    <property type="molecule type" value="Genomic_DNA"/>
</dbReference>
<dbReference type="RefSeq" id="WP_011976222.1">
    <property type="nucleotide sequence ID" value="NC_009636.1"/>
</dbReference>
<dbReference type="RefSeq" id="YP_001327760.1">
    <property type="nucleotide sequence ID" value="NC_009636.1"/>
</dbReference>
<dbReference type="SMR" id="A6UB95"/>
<dbReference type="STRING" id="366394.Smed_2092"/>
<dbReference type="GeneID" id="61613002"/>
<dbReference type="KEGG" id="smd:Smed_2092"/>
<dbReference type="PATRIC" id="fig|366394.8.peg.5250"/>
<dbReference type="eggNOG" id="COG3048">
    <property type="taxonomic scope" value="Bacteria"/>
</dbReference>
<dbReference type="HOGENOM" id="CLU_035707_0_0_5"/>
<dbReference type="OrthoDB" id="9780546at2"/>
<dbReference type="Proteomes" id="UP000001108">
    <property type="component" value="Chromosome"/>
</dbReference>
<dbReference type="GO" id="GO:0008721">
    <property type="term" value="F:D-serine ammonia-lyase activity"/>
    <property type="evidence" value="ECO:0007669"/>
    <property type="project" value="UniProtKB-EC"/>
</dbReference>
<dbReference type="GO" id="GO:0016836">
    <property type="term" value="F:hydro-lyase activity"/>
    <property type="evidence" value="ECO:0007669"/>
    <property type="project" value="UniProtKB-UniRule"/>
</dbReference>
<dbReference type="GO" id="GO:0030170">
    <property type="term" value="F:pyridoxal phosphate binding"/>
    <property type="evidence" value="ECO:0007669"/>
    <property type="project" value="InterPro"/>
</dbReference>
<dbReference type="GO" id="GO:0036088">
    <property type="term" value="P:D-serine catabolic process"/>
    <property type="evidence" value="ECO:0007669"/>
    <property type="project" value="TreeGrafter"/>
</dbReference>
<dbReference type="GO" id="GO:0009097">
    <property type="term" value="P:isoleucine biosynthetic process"/>
    <property type="evidence" value="ECO:0007669"/>
    <property type="project" value="TreeGrafter"/>
</dbReference>
<dbReference type="Gene3D" id="3.40.50.1100">
    <property type="match status" value="2"/>
</dbReference>
<dbReference type="HAMAP" id="MF_01030">
    <property type="entry name" value="D_Ser_dehydrat"/>
    <property type="match status" value="1"/>
</dbReference>
<dbReference type="InterPro" id="IPR011780">
    <property type="entry name" value="D_Ser_am_lyase"/>
</dbReference>
<dbReference type="InterPro" id="IPR050147">
    <property type="entry name" value="Ser/Thr_Dehydratase"/>
</dbReference>
<dbReference type="InterPro" id="IPR001926">
    <property type="entry name" value="TrpB-like_PALP"/>
</dbReference>
<dbReference type="InterPro" id="IPR036052">
    <property type="entry name" value="TrpB-like_PALP_sf"/>
</dbReference>
<dbReference type="NCBIfam" id="TIGR02035">
    <property type="entry name" value="D_Ser_am_lyase"/>
    <property type="match status" value="1"/>
</dbReference>
<dbReference type="NCBIfam" id="NF002823">
    <property type="entry name" value="PRK02991.1"/>
    <property type="match status" value="1"/>
</dbReference>
<dbReference type="PANTHER" id="PTHR48078:SF9">
    <property type="entry name" value="D-SERINE DEHYDRATASE"/>
    <property type="match status" value="1"/>
</dbReference>
<dbReference type="PANTHER" id="PTHR48078">
    <property type="entry name" value="THREONINE DEHYDRATASE, MITOCHONDRIAL-RELATED"/>
    <property type="match status" value="1"/>
</dbReference>
<dbReference type="Pfam" id="PF00291">
    <property type="entry name" value="PALP"/>
    <property type="match status" value="1"/>
</dbReference>
<dbReference type="SUPFAM" id="SSF53686">
    <property type="entry name" value="Tryptophan synthase beta subunit-like PLP-dependent enzymes"/>
    <property type="match status" value="1"/>
</dbReference>
<organism>
    <name type="scientific">Sinorhizobium medicae (strain WSM419)</name>
    <name type="common">Ensifer medicae</name>
    <dbReference type="NCBI Taxonomy" id="366394"/>
    <lineage>
        <taxon>Bacteria</taxon>
        <taxon>Pseudomonadati</taxon>
        <taxon>Pseudomonadota</taxon>
        <taxon>Alphaproteobacteria</taxon>
        <taxon>Hyphomicrobiales</taxon>
        <taxon>Rhizobiaceae</taxon>
        <taxon>Sinorhizobium/Ensifer group</taxon>
        <taxon>Sinorhizobium</taxon>
    </lineage>
</organism>
<name>SDHD_SINMW</name>
<comment type="catalytic activity">
    <reaction evidence="1">
        <text>D-serine = pyruvate + NH4(+)</text>
        <dbReference type="Rhea" id="RHEA:13977"/>
        <dbReference type="ChEBI" id="CHEBI:15361"/>
        <dbReference type="ChEBI" id="CHEBI:28938"/>
        <dbReference type="ChEBI" id="CHEBI:35247"/>
        <dbReference type="EC" id="4.3.1.18"/>
    </reaction>
</comment>
<comment type="cofactor">
    <cofactor evidence="1">
        <name>pyridoxal 5'-phosphate</name>
        <dbReference type="ChEBI" id="CHEBI:597326"/>
    </cofactor>
</comment>
<comment type="similarity">
    <text evidence="1">Belongs to the serine/threonine dehydratase family. DsdA subfamily.</text>
</comment>
<evidence type="ECO:0000255" key="1">
    <source>
        <dbReference type="HAMAP-Rule" id="MF_01030"/>
    </source>
</evidence>
<reference key="1">
    <citation type="submission" date="2007-06" db="EMBL/GenBank/DDBJ databases">
        <title>Complete sequence of Sinorhizobium medicae WSM419 chromosome.</title>
        <authorList>
            <consortium name="US DOE Joint Genome Institute"/>
            <person name="Copeland A."/>
            <person name="Lucas S."/>
            <person name="Lapidus A."/>
            <person name="Barry K."/>
            <person name="Glavina del Rio T."/>
            <person name="Dalin E."/>
            <person name="Tice H."/>
            <person name="Pitluck S."/>
            <person name="Chain P."/>
            <person name="Malfatti S."/>
            <person name="Shin M."/>
            <person name="Vergez L."/>
            <person name="Schmutz J."/>
            <person name="Larimer F."/>
            <person name="Land M."/>
            <person name="Hauser L."/>
            <person name="Kyrpides N."/>
            <person name="Mikhailova N."/>
            <person name="Reeve W.G."/>
            <person name="Richardson P."/>
        </authorList>
    </citation>
    <scope>NUCLEOTIDE SEQUENCE [LARGE SCALE GENOMIC DNA]</scope>
    <source>
        <strain>WSM419</strain>
    </source>
</reference>